<keyword id="KW-0963">Cytoplasm</keyword>
<keyword id="KW-0378">Hydrolase</keyword>
<keyword id="KW-0694">RNA-binding</keyword>
<keyword id="KW-0820">tRNA-binding</keyword>
<dbReference type="EC" id="3.1.1.29" evidence="1"/>
<dbReference type="EMBL" id="CP000976">
    <property type="protein sequence ID" value="ACH93715.1"/>
    <property type="molecule type" value="Genomic_DNA"/>
</dbReference>
<dbReference type="RefSeq" id="WP_012538524.1">
    <property type="nucleotide sequence ID" value="NC_011229.1"/>
</dbReference>
<dbReference type="SMR" id="B5RMX9"/>
<dbReference type="STRING" id="412419.BDU_793"/>
<dbReference type="KEGG" id="bdu:BDU_793"/>
<dbReference type="eggNOG" id="COG0193">
    <property type="taxonomic scope" value="Bacteria"/>
</dbReference>
<dbReference type="HOGENOM" id="CLU_062456_4_1_12"/>
<dbReference type="OrthoDB" id="9800507at2"/>
<dbReference type="Proteomes" id="UP000000611">
    <property type="component" value="Chromosome"/>
</dbReference>
<dbReference type="GO" id="GO:0005737">
    <property type="term" value="C:cytoplasm"/>
    <property type="evidence" value="ECO:0007669"/>
    <property type="project" value="UniProtKB-SubCell"/>
</dbReference>
<dbReference type="GO" id="GO:0004045">
    <property type="term" value="F:peptidyl-tRNA hydrolase activity"/>
    <property type="evidence" value="ECO:0007669"/>
    <property type="project" value="UniProtKB-UniRule"/>
</dbReference>
<dbReference type="GO" id="GO:0000049">
    <property type="term" value="F:tRNA binding"/>
    <property type="evidence" value="ECO:0007669"/>
    <property type="project" value="UniProtKB-UniRule"/>
</dbReference>
<dbReference type="GO" id="GO:0006515">
    <property type="term" value="P:protein quality control for misfolded or incompletely synthesized proteins"/>
    <property type="evidence" value="ECO:0007669"/>
    <property type="project" value="UniProtKB-UniRule"/>
</dbReference>
<dbReference type="GO" id="GO:0072344">
    <property type="term" value="P:rescue of stalled ribosome"/>
    <property type="evidence" value="ECO:0007669"/>
    <property type="project" value="UniProtKB-UniRule"/>
</dbReference>
<dbReference type="CDD" id="cd00462">
    <property type="entry name" value="PTH"/>
    <property type="match status" value="1"/>
</dbReference>
<dbReference type="Gene3D" id="3.40.50.1470">
    <property type="entry name" value="Peptidyl-tRNA hydrolase"/>
    <property type="match status" value="1"/>
</dbReference>
<dbReference type="HAMAP" id="MF_00083">
    <property type="entry name" value="Pept_tRNA_hydro_bact"/>
    <property type="match status" value="1"/>
</dbReference>
<dbReference type="InterPro" id="IPR001328">
    <property type="entry name" value="Pept_tRNA_hydro"/>
</dbReference>
<dbReference type="InterPro" id="IPR018171">
    <property type="entry name" value="Pept_tRNA_hydro_CS"/>
</dbReference>
<dbReference type="InterPro" id="IPR036416">
    <property type="entry name" value="Pept_tRNA_hydro_sf"/>
</dbReference>
<dbReference type="NCBIfam" id="TIGR00447">
    <property type="entry name" value="pth"/>
    <property type="match status" value="1"/>
</dbReference>
<dbReference type="PANTHER" id="PTHR17224">
    <property type="entry name" value="PEPTIDYL-TRNA HYDROLASE"/>
    <property type="match status" value="1"/>
</dbReference>
<dbReference type="PANTHER" id="PTHR17224:SF1">
    <property type="entry name" value="PEPTIDYL-TRNA HYDROLASE"/>
    <property type="match status" value="1"/>
</dbReference>
<dbReference type="Pfam" id="PF01195">
    <property type="entry name" value="Pept_tRNA_hydro"/>
    <property type="match status" value="1"/>
</dbReference>
<dbReference type="SUPFAM" id="SSF53178">
    <property type="entry name" value="Peptidyl-tRNA hydrolase-like"/>
    <property type="match status" value="1"/>
</dbReference>
<dbReference type="PROSITE" id="PS01195">
    <property type="entry name" value="PEPT_TRNA_HYDROL_1"/>
    <property type="match status" value="1"/>
</dbReference>
<dbReference type="PROSITE" id="PS01196">
    <property type="entry name" value="PEPT_TRNA_HYDROL_2"/>
    <property type="match status" value="1"/>
</dbReference>
<protein>
    <recommendedName>
        <fullName evidence="1">Peptidyl-tRNA hydrolase</fullName>
        <shortName evidence="1">Pth</shortName>
        <ecNumber evidence="1">3.1.1.29</ecNumber>
    </recommendedName>
</protein>
<comment type="function">
    <text evidence="1">Hydrolyzes ribosome-free peptidyl-tRNAs (with 1 or more amino acids incorporated), which drop off the ribosome during protein synthesis, or as a result of ribosome stalling.</text>
</comment>
<comment type="function">
    <text evidence="1">Catalyzes the release of premature peptidyl moieties from peptidyl-tRNA molecules trapped in stalled 50S ribosomal subunits, and thus maintains levels of free tRNAs and 50S ribosomes.</text>
</comment>
<comment type="catalytic activity">
    <reaction evidence="1">
        <text>an N-acyl-L-alpha-aminoacyl-tRNA + H2O = an N-acyl-L-amino acid + a tRNA + H(+)</text>
        <dbReference type="Rhea" id="RHEA:54448"/>
        <dbReference type="Rhea" id="RHEA-COMP:10123"/>
        <dbReference type="Rhea" id="RHEA-COMP:13883"/>
        <dbReference type="ChEBI" id="CHEBI:15377"/>
        <dbReference type="ChEBI" id="CHEBI:15378"/>
        <dbReference type="ChEBI" id="CHEBI:59874"/>
        <dbReference type="ChEBI" id="CHEBI:78442"/>
        <dbReference type="ChEBI" id="CHEBI:138191"/>
        <dbReference type="EC" id="3.1.1.29"/>
    </reaction>
</comment>
<comment type="subunit">
    <text evidence="1">Monomer.</text>
</comment>
<comment type="subcellular location">
    <subcellularLocation>
        <location evidence="1">Cytoplasm</location>
    </subcellularLocation>
</comment>
<comment type="similarity">
    <text evidence="1">Belongs to the PTH family.</text>
</comment>
<organism>
    <name type="scientific">Borrelia duttonii (strain Ly)</name>
    <dbReference type="NCBI Taxonomy" id="412419"/>
    <lineage>
        <taxon>Bacteria</taxon>
        <taxon>Pseudomonadati</taxon>
        <taxon>Spirochaetota</taxon>
        <taxon>Spirochaetia</taxon>
        <taxon>Spirochaetales</taxon>
        <taxon>Borreliaceae</taxon>
        <taxon>Borrelia</taxon>
    </lineage>
</organism>
<name>PTH_BORDL</name>
<accession>B5RMX9</accession>
<reference key="1">
    <citation type="journal article" date="2008" name="PLoS Genet.">
        <title>The genome of Borrelia recurrentis, the agent of deadly louse-borne relapsing fever, is a degraded subset of tick-borne Borrelia duttonii.</title>
        <authorList>
            <person name="Lescot M."/>
            <person name="Audic S."/>
            <person name="Robert C."/>
            <person name="Nguyen T.T."/>
            <person name="Blanc G."/>
            <person name="Cutler S.J."/>
            <person name="Wincker P."/>
            <person name="Couloux A."/>
            <person name="Claverie J.-M."/>
            <person name="Raoult D."/>
            <person name="Drancourt M."/>
        </authorList>
    </citation>
    <scope>NUCLEOTIDE SEQUENCE [LARGE SCALE GENOMIC DNA]</scope>
    <source>
        <strain>Ly</strain>
    </source>
</reference>
<sequence length="188" mass="21062">MNLLIVGLGNPGSNFLHTRHNVGFGLIDKLVMKNALSLRKAKNYEYADFNIDSRRIVLIKPLTYMNLSGNIFPFVFSKFYMKINNLLVVVDNVDLPLGKCRLRKVGGASTHNGLRSISESLGSTKYGRLYIGVGNNSAFALKDFVLSKFNDSELVRVKNVFNFLSEEILGIDEFSFEHKIATINSSSF</sequence>
<proteinExistence type="inferred from homology"/>
<feature type="chain" id="PRO_1000092911" description="Peptidyl-tRNA hydrolase">
    <location>
        <begin position="1"/>
        <end position="188"/>
    </location>
</feature>
<feature type="active site" description="Proton acceptor" evidence="1">
    <location>
        <position position="20"/>
    </location>
</feature>
<feature type="binding site" evidence="1">
    <location>
        <position position="15"/>
    </location>
    <ligand>
        <name>tRNA</name>
        <dbReference type="ChEBI" id="CHEBI:17843"/>
    </ligand>
</feature>
<feature type="binding site" evidence="1">
    <location>
        <position position="64"/>
    </location>
    <ligand>
        <name>tRNA</name>
        <dbReference type="ChEBI" id="CHEBI:17843"/>
    </ligand>
</feature>
<feature type="binding site" evidence="1">
    <location>
        <position position="66"/>
    </location>
    <ligand>
        <name>tRNA</name>
        <dbReference type="ChEBI" id="CHEBI:17843"/>
    </ligand>
</feature>
<feature type="binding site" evidence="1">
    <location>
        <position position="112"/>
    </location>
    <ligand>
        <name>tRNA</name>
        <dbReference type="ChEBI" id="CHEBI:17843"/>
    </ligand>
</feature>
<feature type="site" description="Discriminates between blocked and unblocked aminoacyl-tRNA" evidence="1">
    <location>
        <position position="10"/>
    </location>
</feature>
<feature type="site" description="Stabilizes the basic form of H active site to accept a proton" evidence="1">
    <location>
        <position position="91"/>
    </location>
</feature>
<evidence type="ECO:0000255" key="1">
    <source>
        <dbReference type="HAMAP-Rule" id="MF_00083"/>
    </source>
</evidence>
<gene>
    <name evidence="1" type="primary">pth</name>
    <name type="ordered locus">BDU_793</name>
</gene>